<comment type="function">
    <text evidence="1 3 9">Molecular chaperone that functions in the processing and transport of secreted proteins (By similarity). Required for the synthesis of lipophosphoglycan (LPG), a cell surface glycoconjugate (By similarity). Necessary for the attachment of the galactosyl residue to the mannose within the phosphoglycan repeats of the nascent LPG chain (By similarity). Also required for addition of phosphoglycan to acid phosphatase (By similarity). Not required for normal growth (By similarity). Has ATPase activity (PubMed:29568220). Binds heparin with micromolar affinity which may facilitate infection of host cells (PubMed:29568220).</text>
</comment>
<comment type="subunit">
    <text evidence="9">Homotetramer.</text>
</comment>
<comment type="subcellular location">
    <subcellularLocation>
        <location evidence="3">Endoplasmic reticulum</location>
    </subcellularLocation>
</comment>
<comment type="miscellaneous">
    <text evidence="7 8">Prominent antigen during human and canine visceral leishmaniasis.</text>
</comment>
<comment type="similarity">
    <text evidence="13">Belongs to the heat shock protein 90 family.</text>
</comment>
<reference evidence="14" key="1">
    <citation type="journal article" date="2000" name="Exp. Parasitol.">
        <title>Leishmania infantum: gene cloning of the GRP94 homologue, its expression as recombinant protein, and analysis of antigenicity.</title>
        <authorList>
            <person name="Larreta R."/>
            <person name="Soto M."/>
            <person name="Alonso C."/>
            <person name="Requena J.M."/>
        </authorList>
    </citation>
    <scope>NUCLEOTIDE SEQUENCE [GENOMIC DNA]</scope>
    <scope>IDENTIFICATION AS AN ANTIGEN</scope>
    <source>
        <strain evidence="14">MHOM/FR/78/LEM75</strain>
    </source>
</reference>
<reference evidence="15" key="2">
    <citation type="submission" date="2010-10" db="EMBL/GenBank/DDBJ databases">
        <title>Molecular cloning of the LPG3 gene from Leishmania infantum.</title>
        <authorList>
            <person name="Pirdel L."/>
            <person name="Zavaran Hosseini A."/>
            <person name="Kazemi B."/>
            <person name="Rasouli M."/>
        </authorList>
    </citation>
    <scope>NUCLEOTIDE SEQUENCE [MRNA]</scope>
    <source>
        <strain evidence="15">MCAN/IR/96/LON-49</strain>
    </source>
</reference>
<reference evidence="13" key="3">
    <citation type="journal article" date="2002" name="Immunol. Lett.">
        <title>Antigenic properties of the Leishmania infantum GRP94 and mapping of linear B-cell epitopes.</title>
        <authorList>
            <person name="Larreta R."/>
            <person name="Guzman F."/>
            <person name="Patarroyo M.E."/>
            <person name="Alonso C."/>
            <person name="Requena J.M."/>
        </authorList>
    </citation>
    <scope>IDENTIFICATION AS AN ANTIGEN</scope>
    <source>
        <strain evidence="11">MCAN/ES/96/BCN150</strain>
    </source>
</reference>
<reference evidence="13" key="4">
    <citation type="journal article" date="2018" name="Bioinf. Biol. Insights">
        <title>Lipophosphoglycan 3 from Leishmania infantum chagasi binds heparin with micromolar affinity.</title>
        <authorList>
            <person name="Martins T.V.F."/>
            <person name="Zeraik A.E."/>
            <person name="Alves N.O."/>
            <person name="de Oliveira L.L."/>
            <person name="de Oliveira Mendes T.A."/>
            <person name="DeMarco R."/>
            <person name="de Almeida Marques-da-Silva E."/>
        </authorList>
    </citation>
    <scope>IDENTIFICATION BY MASS SPECTROMETRY</scope>
    <scope>FUNCTION</scope>
    <scope>SUBUNIT</scope>
    <source>
        <strain>MHOM/BR/75/M2682</strain>
    </source>
</reference>
<evidence type="ECO:0000250" key="1">
    <source>
        <dbReference type="UniProtKB" id="P08113"/>
    </source>
</evidence>
<evidence type="ECO:0000250" key="2">
    <source>
        <dbReference type="UniProtKB" id="P41148"/>
    </source>
</evidence>
<evidence type="ECO:0000250" key="3">
    <source>
        <dbReference type="UniProtKB" id="Q8T7E0"/>
    </source>
</evidence>
<evidence type="ECO:0000255" key="4"/>
<evidence type="ECO:0000255" key="5">
    <source>
        <dbReference type="PROSITE-ProRule" id="PRU00498"/>
    </source>
</evidence>
<evidence type="ECO:0000256" key="6">
    <source>
        <dbReference type="SAM" id="MobiDB-lite"/>
    </source>
</evidence>
<evidence type="ECO:0000269" key="7">
    <source>
    </source>
</evidence>
<evidence type="ECO:0000269" key="8">
    <source>
    </source>
</evidence>
<evidence type="ECO:0000269" key="9">
    <source>
    </source>
</evidence>
<evidence type="ECO:0000303" key="10">
    <source>
    </source>
</evidence>
<evidence type="ECO:0000303" key="11">
    <source>
    </source>
</evidence>
<evidence type="ECO:0000303" key="12">
    <source>
    </source>
</evidence>
<evidence type="ECO:0000305" key="13"/>
<evidence type="ECO:0000312" key="14">
    <source>
        <dbReference type="EMBL" id="AAF67727.1"/>
    </source>
</evidence>
<evidence type="ECO:0000312" key="15">
    <source>
        <dbReference type="EMBL" id="ADP89477.1"/>
    </source>
</evidence>
<feature type="signal peptide" evidence="4">
    <location>
        <begin position="1"/>
        <end position="24"/>
    </location>
</feature>
<feature type="chain" id="PRO_5010148570" description="Endoplasmin homolog" evidence="4">
    <location>
        <begin position="25"/>
        <end position="771"/>
    </location>
</feature>
<feature type="region of interest" description="Disordered" evidence="6">
    <location>
        <begin position="253"/>
        <end position="282"/>
    </location>
</feature>
<feature type="region of interest" description="Disordered" evidence="6">
    <location>
        <begin position="727"/>
        <end position="771"/>
    </location>
</feature>
<feature type="short sequence motif" description="Prevents secretion from ER" evidence="3">
    <location>
        <begin position="768"/>
        <end position="771"/>
    </location>
</feature>
<feature type="compositionally biased region" description="Acidic residues" evidence="6">
    <location>
        <begin position="260"/>
        <end position="277"/>
    </location>
</feature>
<feature type="compositionally biased region" description="Acidic residues" evidence="6">
    <location>
        <begin position="758"/>
        <end position="771"/>
    </location>
</feature>
<feature type="binding site" evidence="2">
    <location>
        <position position="63"/>
    </location>
    <ligand>
        <name>ATP</name>
        <dbReference type="ChEBI" id="CHEBI:30616"/>
    </ligand>
</feature>
<feature type="binding site" evidence="2">
    <location>
        <position position="109"/>
    </location>
    <ligand>
        <name>ATP</name>
        <dbReference type="ChEBI" id="CHEBI:30616"/>
    </ligand>
</feature>
<feature type="binding site" evidence="2">
    <location>
        <position position="160"/>
    </location>
    <ligand>
        <name>ATP</name>
        <dbReference type="ChEBI" id="CHEBI:30616"/>
    </ligand>
</feature>
<feature type="site" description="Important for ATP hydrolysis" evidence="2">
    <location>
        <position position="405"/>
    </location>
</feature>
<feature type="glycosylation site" description="N-linked (GlcNAc...) asparagine" evidence="5">
    <location>
        <position position="63"/>
    </location>
</feature>
<feature type="glycosylation site" description="N-linked (GlcNAc...) asparagine" evidence="5">
    <location>
        <position position="306"/>
    </location>
</feature>
<feature type="glycosylation site" description="N-linked (GlcNAc...) asparagine" evidence="5">
    <location>
        <position position="402"/>
    </location>
</feature>
<name>ENPL_LEIIN</name>
<gene>
    <name evidence="12" type="primary">LPG3</name>
    <name evidence="10" type="synonym">GRP94</name>
</gene>
<dbReference type="EMBL" id="AF253053">
    <property type="protein sequence ID" value="AAF67727.1"/>
    <property type="molecule type" value="Genomic_DNA"/>
</dbReference>
<dbReference type="EMBL" id="HQ400675">
    <property type="protein sequence ID" value="ADP89477.1"/>
    <property type="molecule type" value="mRNA"/>
</dbReference>
<dbReference type="SMR" id="Q9NGD0"/>
<dbReference type="GlyCosmos" id="Q9NGD0">
    <property type="glycosylation" value="3 sites, No reported glycans"/>
</dbReference>
<dbReference type="VEuPathDB" id="TriTrypDB:LINF_290012700"/>
<dbReference type="GO" id="GO:0005783">
    <property type="term" value="C:endoplasmic reticulum"/>
    <property type="evidence" value="ECO:0007669"/>
    <property type="project" value="UniProtKB-SubCell"/>
</dbReference>
<dbReference type="GO" id="GO:0005524">
    <property type="term" value="F:ATP binding"/>
    <property type="evidence" value="ECO:0007669"/>
    <property type="project" value="UniProtKB-KW"/>
</dbReference>
<dbReference type="GO" id="GO:0016887">
    <property type="term" value="F:ATP hydrolysis activity"/>
    <property type="evidence" value="ECO:0007669"/>
    <property type="project" value="InterPro"/>
</dbReference>
<dbReference type="GO" id="GO:0140662">
    <property type="term" value="F:ATP-dependent protein folding chaperone"/>
    <property type="evidence" value="ECO:0007669"/>
    <property type="project" value="InterPro"/>
</dbReference>
<dbReference type="GO" id="GO:0008201">
    <property type="term" value="F:heparin binding"/>
    <property type="evidence" value="ECO:0007669"/>
    <property type="project" value="UniProtKB-KW"/>
</dbReference>
<dbReference type="GO" id="GO:0051082">
    <property type="term" value="F:unfolded protein binding"/>
    <property type="evidence" value="ECO:0007669"/>
    <property type="project" value="InterPro"/>
</dbReference>
<dbReference type="CDD" id="cd16927">
    <property type="entry name" value="HATPase_Hsp90-like"/>
    <property type="match status" value="1"/>
</dbReference>
<dbReference type="FunFam" id="3.30.565.10:FF:000054">
    <property type="entry name" value="Heat shock protein 90"/>
    <property type="match status" value="1"/>
</dbReference>
<dbReference type="FunFam" id="3.40.50.11260:FF:000005">
    <property type="entry name" value="Heat shock protein 90"/>
    <property type="match status" value="1"/>
</dbReference>
<dbReference type="FunFam" id="3.30.230.80:FF:000014">
    <property type="entry name" value="Lipophosphoglycan biosynthetic protein, putative"/>
    <property type="match status" value="1"/>
</dbReference>
<dbReference type="Gene3D" id="3.30.230.80">
    <property type="match status" value="1"/>
</dbReference>
<dbReference type="Gene3D" id="3.40.50.11260">
    <property type="match status" value="1"/>
</dbReference>
<dbReference type="Gene3D" id="1.20.120.790">
    <property type="entry name" value="Heat shock protein 90, C-terminal domain"/>
    <property type="match status" value="1"/>
</dbReference>
<dbReference type="Gene3D" id="3.30.565.10">
    <property type="entry name" value="Histidine kinase-like ATPase, C-terminal domain"/>
    <property type="match status" value="1"/>
</dbReference>
<dbReference type="HAMAP" id="MF_00505">
    <property type="entry name" value="HSP90"/>
    <property type="match status" value="1"/>
</dbReference>
<dbReference type="InterPro" id="IPR036890">
    <property type="entry name" value="HATPase_C_sf"/>
</dbReference>
<dbReference type="InterPro" id="IPR037196">
    <property type="entry name" value="HSP90_C"/>
</dbReference>
<dbReference type="InterPro" id="IPR001404">
    <property type="entry name" value="Hsp90_fam"/>
</dbReference>
<dbReference type="InterPro" id="IPR020575">
    <property type="entry name" value="Hsp90_N"/>
</dbReference>
<dbReference type="InterPro" id="IPR020568">
    <property type="entry name" value="Ribosomal_Su5_D2-typ_SF"/>
</dbReference>
<dbReference type="NCBIfam" id="NF003555">
    <property type="entry name" value="PRK05218.1"/>
    <property type="match status" value="1"/>
</dbReference>
<dbReference type="PANTHER" id="PTHR11528">
    <property type="entry name" value="HEAT SHOCK PROTEIN 90 FAMILY MEMBER"/>
    <property type="match status" value="1"/>
</dbReference>
<dbReference type="Pfam" id="PF13589">
    <property type="entry name" value="HATPase_c_3"/>
    <property type="match status" value="1"/>
</dbReference>
<dbReference type="Pfam" id="PF00183">
    <property type="entry name" value="HSP90"/>
    <property type="match status" value="1"/>
</dbReference>
<dbReference type="PIRSF" id="PIRSF002583">
    <property type="entry name" value="Hsp90"/>
    <property type="match status" value="1"/>
</dbReference>
<dbReference type="PRINTS" id="PR00775">
    <property type="entry name" value="HEATSHOCK90"/>
</dbReference>
<dbReference type="SUPFAM" id="SSF55874">
    <property type="entry name" value="ATPase domain of HSP90 chaperone/DNA topoisomerase II/histidine kinase"/>
    <property type="match status" value="1"/>
</dbReference>
<dbReference type="SUPFAM" id="SSF110942">
    <property type="entry name" value="HSP90 C-terminal domain"/>
    <property type="match status" value="1"/>
</dbReference>
<dbReference type="SUPFAM" id="SSF54211">
    <property type="entry name" value="Ribosomal protein S5 domain 2-like"/>
    <property type="match status" value="1"/>
</dbReference>
<sequence>MANSSLLRVVLVALLLLGSVTVSAGDGRGTPIAFQAEVSKMLDILVNSLYTNRAVFLRELISNGSDALDKIRVLYLTSPKEPLTKDGEAPTMDLRISFDKEKSELILRDGGVGMTKEELAKHLGSLGTSGTKHFLEKLQEGVGAGGGDQNNLIGQFGVGFYSVFLVGDRVRVASKSDDSDEQYVWESKGDGQYFLYPDPRGNTLGRGTEITIELKPDAEQFLSAETIKKTIHQYSEFINFPIYVQEEVEVASTAATPEPAAEEGSLDEGAVEEDPDKEGDTQGVVKERRWTLVNENRPIWTRPIGNVTEEEYHTFYKAFSGDYRDPLYFNHFKVEGEVDFDSILFVPTTVDPASFSDDNSVPNTNIKLYVRRVFITDEFRDLLPRYLNFVKGIVDSNDLPLNVSREVLQESRILRVIKKKLVRKTLSMFADIAAQDEAIANGKQVESPAPSGHTHLKKPAYTKFWELYGKHLRLGVMLDSNNRNRLTKLFRYKSSRSESEYISLQTYVDRMKKGQKGIYYLSGDSVARIKKSPVLEDAVNHDVEVIFMTDAIDEYVVSQLTDFAGKKLINLAKEGVQLEESDARQRVADRKRKEKYDSFFTHLRALFGYSEVRKVILTKRMTNEAFLVSSGENQITARLASIMRGQSMSLANQQMTAERVLEVNYRHPLVDEMFKRFTVDEDDEVATDIAWVLYDTANLQAEFPVADVAAYSKRINRLLRSSVDLSADDSLLPPDDAEYTVSDTEAEEEEEQPKVDANADEEAEAVGEDDL</sequence>
<organism evidence="14">
    <name type="scientific">Leishmania infantum</name>
    <dbReference type="NCBI Taxonomy" id="5671"/>
    <lineage>
        <taxon>Eukaryota</taxon>
        <taxon>Discoba</taxon>
        <taxon>Euglenozoa</taxon>
        <taxon>Kinetoplastea</taxon>
        <taxon>Metakinetoplastina</taxon>
        <taxon>Trypanosomatida</taxon>
        <taxon>Trypanosomatidae</taxon>
        <taxon>Leishmaniinae</taxon>
        <taxon>Leishmania</taxon>
    </lineage>
</organism>
<keyword id="KW-0067">ATP-binding</keyword>
<keyword id="KW-0143">Chaperone</keyword>
<keyword id="KW-0256">Endoplasmic reticulum</keyword>
<keyword id="KW-0325">Glycoprotein</keyword>
<keyword id="KW-0358">Heparin-binding</keyword>
<keyword id="KW-0547">Nucleotide-binding</keyword>
<keyword id="KW-0732">Signal</keyword>
<proteinExistence type="evidence at protein level"/>
<accession>Q9NGD0</accession>
<protein>
    <recommendedName>
        <fullName evidence="13">Endoplasmin homolog</fullName>
    </recommendedName>
    <alternativeName>
        <fullName evidence="10">Glucose-regulated protein 94</fullName>
    </alternativeName>
    <alternativeName>
        <fullName evidence="12">Lipophosphoglycan biosynthetic protein 3</fullName>
    </alternativeName>
</protein>